<evidence type="ECO:0000255" key="1">
    <source>
        <dbReference type="PROSITE-ProRule" id="PRU00057"/>
    </source>
</evidence>
<evidence type="ECO:0000256" key="2">
    <source>
        <dbReference type="SAM" id="MobiDB-lite"/>
    </source>
</evidence>
<evidence type="ECO:0000269" key="3">
    <source>
    </source>
</evidence>
<evidence type="ECO:0000269" key="4">
    <source>
    </source>
</evidence>
<evidence type="ECO:0000269" key="5">
    <source>
    </source>
</evidence>
<evidence type="ECO:0000269" key="6">
    <source>
    </source>
</evidence>
<evidence type="ECO:0000269" key="7">
    <source>
    </source>
</evidence>
<evidence type="ECO:0000269" key="8">
    <source>
    </source>
</evidence>
<evidence type="ECO:0000305" key="9"/>
<evidence type="ECO:0000305" key="10">
    <source>
    </source>
</evidence>
<proteinExistence type="evidence at protein level"/>
<organism>
    <name type="scientific">Arabidopsis thaliana</name>
    <name type="common">Mouse-ear cress</name>
    <dbReference type="NCBI Taxonomy" id="3702"/>
    <lineage>
        <taxon>Eukaryota</taxon>
        <taxon>Viridiplantae</taxon>
        <taxon>Streptophyta</taxon>
        <taxon>Embryophyta</taxon>
        <taxon>Tracheophyta</taxon>
        <taxon>Spermatophyta</taxon>
        <taxon>Magnoliopsida</taxon>
        <taxon>eudicotyledons</taxon>
        <taxon>Gunneridae</taxon>
        <taxon>Pentapetalae</taxon>
        <taxon>rosids</taxon>
        <taxon>malvids</taxon>
        <taxon>Brassicales</taxon>
        <taxon>Brassicaceae</taxon>
        <taxon>Camelineae</taxon>
        <taxon>Arabidopsis</taxon>
    </lineage>
</organism>
<sequence>MATTMKGLLKGLRYITQIFDEEKEQEMQIGFPTDVKHVAHIGSDGPTNTTPSWMNDFKTQEHEKGQVVSRGNSNKYNPQGTNQRGAGLKELLPSNTNEKPKQKTRRKPGGAASPNHNGSPPRKSSGNAASSDEPSKHSRHNRSAHGSTDSSNDQEPSVRRRRGGIPAPDTEVPNQIPDGSAPPRKATSRPRKLKGSSAGGEGSIKKSSKGKPENSVDTTCNDII</sequence>
<gene>
    <name type="primary">RIC1</name>
    <name type="ordered locus">At2g33460</name>
    <name type="ORF">F4P9.23</name>
</gene>
<accession>F4IVV0</accession>
<accession>O22796</accession>
<protein>
    <recommendedName>
        <fullName>CRIB domain-containing protein RIC1</fullName>
    </recommendedName>
    <alternativeName>
        <fullName>ROP-interactive CRIB motif-containing protein 1</fullName>
    </alternativeName>
    <alternativeName>
        <fullName>Target of ROP protein RIC1</fullName>
    </alternativeName>
</protein>
<feature type="chain" id="PRO_0000422724" description="CRIB domain-containing protein RIC1">
    <location>
        <begin position="1"/>
        <end position="224"/>
    </location>
</feature>
<feature type="domain" description="CRIB" evidence="1">
    <location>
        <begin position="29"/>
        <end position="42"/>
    </location>
</feature>
<feature type="region of interest" description="Disordered" evidence="2">
    <location>
        <begin position="38"/>
        <end position="224"/>
    </location>
</feature>
<feature type="compositionally biased region" description="Polar residues" evidence="2">
    <location>
        <begin position="69"/>
        <end position="84"/>
    </location>
</feature>
<feature type="compositionally biased region" description="Polar residues" evidence="2">
    <location>
        <begin position="114"/>
        <end position="132"/>
    </location>
</feature>
<feature type="compositionally biased region" description="Polar residues" evidence="2">
    <location>
        <begin position="144"/>
        <end position="155"/>
    </location>
</feature>
<feature type="compositionally biased region" description="Polar residues" evidence="2">
    <location>
        <begin position="215"/>
        <end position="224"/>
    </location>
</feature>
<feature type="mutagenesis site" description="Loss of interaction with ARAC11/ROP1." evidence="3">
    <original>H</original>
    <variation>D</variation>
    <location>
        <position position="37"/>
    </location>
</feature>
<feature type="mutagenesis site" description="Loss of interaction with ARAC11/ROP1; when associated with D37." evidence="3">
    <original>H</original>
    <variation>D</variation>
    <location>
        <position position="40"/>
    </location>
</feature>
<dbReference type="EMBL" id="AC002332">
    <property type="protein sequence ID" value="AAB80663.1"/>
    <property type="status" value="ALT_SEQ"/>
    <property type="molecule type" value="Genomic_DNA"/>
</dbReference>
<dbReference type="EMBL" id="CP002685">
    <property type="protein sequence ID" value="AEC08837.1"/>
    <property type="molecule type" value="Genomic_DNA"/>
</dbReference>
<dbReference type="PIR" id="G84745">
    <property type="entry name" value="G84745"/>
</dbReference>
<dbReference type="RefSeq" id="NP_180904.2">
    <property type="nucleotide sequence ID" value="NM_128906.3"/>
</dbReference>
<dbReference type="BioGRID" id="3258">
    <property type="interactions" value="8"/>
</dbReference>
<dbReference type="FunCoup" id="F4IVV0">
    <property type="interactions" value="16"/>
</dbReference>
<dbReference type="STRING" id="3702.F4IVV0"/>
<dbReference type="PaxDb" id="3702-AT2G33460.1"/>
<dbReference type="ProteomicsDB" id="236980"/>
<dbReference type="EnsemblPlants" id="AT2G33460.1">
    <property type="protein sequence ID" value="AT2G33460.1"/>
    <property type="gene ID" value="AT2G33460"/>
</dbReference>
<dbReference type="GeneID" id="817911"/>
<dbReference type="Gramene" id="AT2G33460.1">
    <property type="protein sequence ID" value="AT2G33460.1"/>
    <property type="gene ID" value="AT2G33460"/>
</dbReference>
<dbReference type="KEGG" id="ath:AT2G33460"/>
<dbReference type="Araport" id="AT2G33460"/>
<dbReference type="TAIR" id="AT2G33460">
    <property type="gene designation" value="RIC1"/>
</dbReference>
<dbReference type="eggNOG" id="ENOG502S3JH">
    <property type="taxonomic scope" value="Eukaryota"/>
</dbReference>
<dbReference type="HOGENOM" id="CLU_086489_0_1_1"/>
<dbReference type="InParanoid" id="F4IVV0"/>
<dbReference type="OMA" id="RHNRSAH"/>
<dbReference type="OrthoDB" id="4206278at2759"/>
<dbReference type="PRO" id="PR:F4IVV0"/>
<dbReference type="Proteomes" id="UP000006548">
    <property type="component" value="Chromosome 2"/>
</dbReference>
<dbReference type="ExpressionAtlas" id="F4IVV0">
    <property type="expression patterns" value="baseline and differential"/>
</dbReference>
<dbReference type="GO" id="GO:0016324">
    <property type="term" value="C:apical plasma membrane"/>
    <property type="evidence" value="ECO:0000314"/>
    <property type="project" value="TAIR"/>
</dbReference>
<dbReference type="GO" id="GO:0010005">
    <property type="term" value="C:cortical microtubule, transverse to long axis"/>
    <property type="evidence" value="ECO:0000314"/>
    <property type="project" value="TAIR"/>
</dbReference>
<dbReference type="GO" id="GO:0000902">
    <property type="term" value="P:cell morphogenesis"/>
    <property type="evidence" value="ECO:0000315"/>
    <property type="project" value="TAIR"/>
</dbReference>
<dbReference type="GO" id="GO:0010215">
    <property type="term" value="P:cellulose microfibril organization"/>
    <property type="evidence" value="ECO:0000315"/>
    <property type="project" value="TAIR"/>
</dbReference>
<dbReference type="GO" id="GO:0031122">
    <property type="term" value="P:cytoplasmic microtubule organization"/>
    <property type="evidence" value="ECO:0000315"/>
    <property type="project" value="TAIR"/>
</dbReference>
<dbReference type="GO" id="GO:0009860">
    <property type="term" value="P:pollen tube growth"/>
    <property type="evidence" value="ECO:0000315"/>
    <property type="project" value="TAIR"/>
</dbReference>
<dbReference type="CDD" id="cd00132">
    <property type="entry name" value="CRIB"/>
    <property type="match status" value="1"/>
</dbReference>
<dbReference type="InterPro" id="IPR000095">
    <property type="entry name" value="CRIB_dom"/>
</dbReference>
<dbReference type="PANTHER" id="PTHR46325:SF50">
    <property type="entry name" value="CRIB DOMAIN-CONTAINING PROTEIN RIC1"/>
    <property type="match status" value="1"/>
</dbReference>
<dbReference type="PANTHER" id="PTHR46325">
    <property type="entry name" value="CRIB DOMAIN-CONTAINING PROTEIN RIC8"/>
    <property type="match status" value="1"/>
</dbReference>
<dbReference type="Pfam" id="PF00786">
    <property type="entry name" value="PBD"/>
    <property type="match status" value="1"/>
</dbReference>
<dbReference type="SMART" id="SM00285">
    <property type="entry name" value="PBD"/>
    <property type="match status" value="1"/>
</dbReference>
<dbReference type="PROSITE" id="PS50108">
    <property type="entry name" value="CRIB"/>
    <property type="match status" value="1"/>
</dbReference>
<reference key="1">
    <citation type="journal article" date="1999" name="Nature">
        <title>Sequence and analysis of chromosome 2 of the plant Arabidopsis thaliana.</title>
        <authorList>
            <person name="Lin X."/>
            <person name="Kaul S."/>
            <person name="Rounsley S.D."/>
            <person name="Shea T.P."/>
            <person name="Benito M.-I."/>
            <person name="Town C.D."/>
            <person name="Fujii C.Y."/>
            <person name="Mason T.M."/>
            <person name="Bowman C.L."/>
            <person name="Barnstead M.E."/>
            <person name="Feldblyum T.V."/>
            <person name="Buell C.R."/>
            <person name="Ketchum K.A."/>
            <person name="Lee J.J."/>
            <person name="Ronning C.M."/>
            <person name="Koo H.L."/>
            <person name="Moffat K.S."/>
            <person name="Cronin L.A."/>
            <person name="Shen M."/>
            <person name="Pai G."/>
            <person name="Van Aken S."/>
            <person name="Umayam L."/>
            <person name="Tallon L.J."/>
            <person name="Gill J.E."/>
            <person name="Adams M.D."/>
            <person name="Carrera A.J."/>
            <person name="Creasy T.H."/>
            <person name="Goodman H.M."/>
            <person name="Somerville C.R."/>
            <person name="Copenhaver G.P."/>
            <person name="Preuss D."/>
            <person name="Nierman W.C."/>
            <person name="White O."/>
            <person name="Eisen J.A."/>
            <person name="Salzberg S.L."/>
            <person name="Fraser C.M."/>
            <person name="Venter J.C."/>
        </authorList>
    </citation>
    <scope>NUCLEOTIDE SEQUENCE [LARGE SCALE GENOMIC DNA]</scope>
    <source>
        <strain>cv. Columbia</strain>
    </source>
</reference>
<reference key="2">
    <citation type="journal article" date="2017" name="Plant J.">
        <title>Araport11: a complete reannotation of the Arabidopsis thaliana reference genome.</title>
        <authorList>
            <person name="Cheng C.Y."/>
            <person name="Krishnakumar V."/>
            <person name="Chan A.P."/>
            <person name="Thibaud-Nissen F."/>
            <person name="Schobel S."/>
            <person name="Town C.D."/>
        </authorList>
    </citation>
    <scope>GENOME REANNOTATION</scope>
    <source>
        <strain>cv. Columbia</strain>
    </source>
</reference>
<reference key="3">
    <citation type="journal article" date="2001" name="Plant Cell">
        <title>A genome-wide analysis of Arabidopsis Rop-interactive CRIB motif-containing proteins that act as Rop GTPase targets.</title>
        <authorList>
            <person name="Wu G."/>
            <person name="Gu Y."/>
            <person name="Li S."/>
            <person name="Yang Z."/>
        </authorList>
    </citation>
    <scope>FUNCTION</scope>
    <scope>INTERACTION WITH ARAC11/ROP1</scope>
    <scope>SUBCELLULAR LOCATION</scope>
    <scope>TISSUE SPECIFICITY</scope>
    <scope>GENE FAMILY</scope>
    <scope>NOMENCLATURE</scope>
    <scope>MUTAGENESIS OF HIS-37 AND HIS-40</scope>
</reference>
<reference key="4">
    <citation type="journal article" date="2005" name="Cell">
        <title>Arabidopsis interdigitating cell growth requires two antagonistic pathways with opposing action on cell morphogenesis.</title>
        <authorList>
            <person name="Fu Y."/>
            <person name="Gu Y."/>
            <person name="Zheng Z."/>
            <person name="Wasteneys G."/>
            <person name="Yang Z."/>
        </authorList>
    </citation>
    <scope>FUNCTION</scope>
    <scope>INTERACTION WITH ARAC4/ROP2</scope>
    <scope>SUBCELLULAR LOCATION</scope>
    <scope>DISRUPTION PHENOTYPE</scope>
</reference>
<reference key="5">
    <citation type="journal article" date="2009" name="Curr. Biol.">
        <title>A ROP GTPase signaling pathway controls cortical microtubule ordering and cell expansion in Arabidopsis.</title>
        <authorList>
            <person name="Fu Y."/>
            <person name="Xu T."/>
            <person name="Zhu L."/>
            <person name="Wen M."/>
            <person name="Yang Z."/>
        </authorList>
    </citation>
    <scope>FUNCTION</scope>
    <scope>DISRUPTION PHENOTYPE</scope>
    <source>
        <strain>cv. Wassilewskija</strain>
    </source>
</reference>
<reference key="6">
    <citation type="journal article" date="2011" name="Plant J.">
        <title>Cortical microtubules optimize cell-wall crystallinity to drive unidirectional growth in Arabidopsis.</title>
        <authorList>
            <person name="Fujita M."/>
            <person name="Himmelspach R."/>
            <person name="Hocart C.H."/>
            <person name="Williamson R.E."/>
            <person name="Mansfield S.D."/>
            <person name="Wasteneys G.O."/>
        </authorList>
    </citation>
    <scope>FUNCTION</scope>
</reference>
<reference key="7">
    <citation type="journal article" date="2012" name="Curr. Biol.">
        <title>ABP1 and ROP6 GTPase signaling regulate clathrin-mediated endocytosis in Arabidopsis roots.</title>
        <authorList>
            <person name="Chen X."/>
            <person name="Naramoto S."/>
            <person name="Robert S."/>
            <person name="Tejos R."/>
            <person name="Loefke C."/>
            <person name="Lin D."/>
            <person name="Yang Z."/>
            <person name="Friml J."/>
        </authorList>
    </citation>
    <scope>FUNCTION</scope>
</reference>
<reference key="8">
    <citation type="journal article" date="2013" name="Plant Cell Environ.">
        <title>Arabidopsis ROP-interactive CRIB motif-containing protein 1 (RIC1) positively regulates auxin signalling and negatively regulates abscisic acid (ABA) signalling during root development.</title>
        <authorList>
            <person name="Choi Y."/>
            <person name="Lee Y."/>
            <person name="Kim S.Y."/>
            <person name="Lee Y."/>
            <person name="Hwang J.U."/>
        </authorList>
    </citation>
    <scope>FUNCTION</scope>
    <scope>SUBCELLULAR LOCATION</scope>
    <scope>TISSUE SPECIFICITY</scope>
    <scope>INDUCTION</scope>
    <scope>DISRUPTION PHENOTYPE</scope>
</reference>
<comment type="function">
    <text evidence="3 4 5 6 7 8">Functions as a downstream effector of Rho-related GTP binding proteins of the 'Rho of Plants' (ROPs) family. Participates in the propagation of ROP GTPase signals in specific cellular responses. Required for cortical microtubule organization. Promotes microtubule bundling and formation of well-ordered microtubule arrays in the neck region of pavement cells. This restricts cell lateral expansion to generate the narrow neck morphology of pavement cells. Its function is inhibited when it interacts with activated ARAC4/ROP2. Represses ARAC4/ROP2 activation and antagonizes the RIC4-actin pathway that promotes the assembly of cortical actin microfilaments. Acts as a downstream effector of ARAC3/ROP6 which functions in a signaling pathway that negatively regulates clathrin-mediated endocytosis and internalization of PIN1 and PIN2. Required for the asymmetric auxin distribution during root gravitropism and vascular patterning. Positively regulates auxin responses, but negatively regulates ABA responses during lateral root development and primary root elongation.</text>
</comment>
<comment type="subunit">
    <text evidence="3 4">Interacts with ARAC11/ROP1.</text>
</comment>
<comment type="subcellular location">
    <subcellularLocation>
        <location evidence="4">Cytoplasm</location>
        <location evidence="4">Cytoskeleton</location>
    </subcellularLocation>
    <subcellularLocation>
        <location evidence="3 4 8">Cytoplasm</location>
    </subcellularLocation>
    <text evidence="8">Associates with and promotes the organization of cortical microtubules in leaf epidermal pavement cells. Localizes to punctate loci in the cytoplasm of root cells.</text>
</comment>
<comment type="tissue specificity">
    <text evidence="3 8">Expressed in columella cells from the root tip and epidermal cells at the base of lateral roots, leaves, stems, flowers, anthers, pollen and siliques.</text>
</comment>
<comment type="induction">
    <text evidence="8">By auxin and abscisic acid (ABA) in roots.</text>
</comment>
<comment type="disruption phenotype">
    <text evidence="4 5 8">Reduced primary root elongation.</text>
</comment>
<comment type="miscellaneous">
    <text evidence="10">Over-expression of RIC1 in tobacco germinating pollen reduces pollen tube elongation.</text>
</comment>
<comment type="sequence caution" evidence="9">
    <conflict type="erroneous gene model prediction">
        <sequence resource="EMBL-CDS" id="AAB80663"/>
    </conflict>
</comment>
<keyword id="KW-0963">Cytoplasm</keyword>
<keyword id="KW-0206">Cytoskeleton</keyword>
<keyword id="KW-0217">Developmental protein</keyword>
<keyword id="KW-0341">Growth regulation</keyword>
<keyword id="KW-1185">Reference proteome</keyword>
<name>RIC1_ARATH</name>